<dbReference type="GO" id="GO:0005576">
    <property type="term" value="C:extracellular region"/>
    <property type="evidence" value="ECO:0007669"/>
    <property type="project" value="UniProtKB-SubCell"/>
</dbReference>
<dbReference type="GO" id="GO:0090729">
    <property type="term" value="F:toxin activity"/>
    <property type="evidence" value="ECO:0007669"/>
    <property type="project" value="UniProtKB-KW"/>
</dbReference>
<organism>
    <name type="scientific">Doratifera vulnerans</name>
    <name type="common">Mottled cup moth</name>
    <dbReference type="NCBI Taxonomy" id="1372962"/>
    <lineage>
        <taxon>Eukaryota</taxon>
        <taxon>Metazoa</taxon>
        <taxon>Ecdysozoa</taxon>
        <taxon>Arthropoda</taxon>
        <taxon>Hexapoda</taxon>
        <taxon>Insecta</taxon>
        <taxon>Pterygota</taxon>
        <taxon>Neoptera</taxon>
        <taxon>Endopterygota</taxon>
        <taxon>Lepidoptera</taxon>
        <taxon>Glossata</taxon>
        <taxon>Ditrysia</taxon>
        <taxon>Zygaenoidea</taxon>
        <taxon>Limacodidae</taxon>
        <taxon>Doratifera</taxon>
    </lineage>
</organism>
<accession>P0DUT6</accession>
<reference key="1">
    <citation type="journal article" date="2021" name="Proc. Natl. Acad. Sci. U.S.A.">
        <title>Production, composition, and mode of action of the painful defensive venom produced by a limacodid caterpillar, Doratifera vulnerans.</title>
        <authorList>
            <person name="Walker A.A."/>
            <person name="Robinson S.D."/>
            <person name="Paluzzi J.V."/>
            <person name="Merritt D.J."/>
            <person name="Nixon S.A."/>
            <person name="Schroeder C.I."/>
            <person name="Jin J."/>
            <person name="Goudarzi M.H."/>
            <person name="Kotze A.C."/>
            <person name="Dekan Z."/>
            <person name="Sombke A."/>
            <person name="Alewood P.F."/>
            <person name="Fry B.G."/>
            <person name="Epstein M.E."/>
            <person name="Vetter I."/>
            <person name="King G.F."/>
        </authorList>
    </citation>
    <scope>NUCLEOTIDE SEQUENCE [MRNA]</scope>
    <scope>PROTEIN SEQUENCE OF 21-31</scope>
    <scope>FUNCTION</scope>
    <scope>SUBCELLULAR LOCATION</scope>
    <scope>AMIDATION AT GLY-31 AND GLY-47</scope>
    <scope>IDENTIFICATION BY MASS SPECTROMETRY</scope>
    <source>
        <tissue>Venom</tissue>
    </source>
</reference>
<feature type="signal peptide" evidence="1">
    <location>
        <begin position="1"/>
        <end position="20"/>
    </location>
</feature>
<feature type="peptide" id="PRO_0000453417" description="U-LCTX(59)-Dv128 peptide 1" evidence="1">
    <location>
        <begin position="21"/>
        <end position="31"/>
    </location>
</feature>
<feature type="propeptide" id="PRO_0000453418" evidence="1">
    <location>
        <begin position="33"/>
        <end position="37"/>
    </location>
</feature>
<feature type="peptide" id="PRO_0000453419" description="U-LCTX(59)-Dv128 peptide 2" evidence="1">
    <location>
        <begin position="38"/>
        <end position="47"/>
    </location>
</feature>
<feature type="propeptide" id="PRO_0000453420" evidence="1">
    <location>
        <begin position="49"/>
        <end position="53"/>
    </location>
</feature>
<feature type="peptide" id="PRO_0000453421" description="U-LCTX(59)-Dv128 peptide 3" evidence="1">
    <location>
        <begin position="54"/>
        <end position="66"/>
    </location>
</feature>
<feature type="repeat" description="1" evidence="4">
    <location>
        <begin position="22"/>
        <end position="37"/>
    </location>
</feature>
<feature type="repeat" description="2" evidence="4">
    <location>
        <begin position="38"/>
        <end position="53"/>
    </location>
</feature>
<feature type="repeat" description="3; half-length" evidence="4">
    <location>
        <begin position="54"/>
        <end position="64"/>
    </location>
</feature>
<feature type="region of interest" description="3 X 16 AA tandem repeats of [FI]-G-G-G-L-G-G-A-V-G-G-R-R-R-R-D" evidence="4">
    <location>
        <begin position="21"/>
        <end position="66"/>
    </location>
</feature>
<feature type="modified residue" description="Glycine amide" evidence="1">
    <location>
        <position position="31"/>
    </location>
</feature>
<feature type="modified residue" description="Glycine amide" evidence="1">
    <location>
        <position position="47"/>
    </location>
</feature>
<evidence type="ECO:0000269" key="1">
    <source>
    </source>
</evidence>
<evidence type="ECO:0000303" key="2">
    <source>
    </source>
</evidence>
<evidence type="ECO:0000305" key="3"/>
<evidence type="ECO:0000305" key="4">
    <source>
    </source>
</evidence>
<keyword id="KW-0027">Amidation</keyword>
<keyword id="KW-0165">Cleavage on pair of basic residues</keyword>
<keyword id="KW-0903">Direct protein sequencing</keyword>
<keyword id="KW-0677">Repeat</keyword>
<keyword id="KW-0964">Secreted</keyword>
<keyword id="KW-0732">Signal</keyword>
<keyword id="KW-0800">Toxin</keyword>
<name>U5928_DORVU</name>
<sequence>MRHLLVLLLICLSVIAMAQATFGGGLGGAVGGRRRRDIGGGLGGAVGGRRRRDIGGGLGGAVGGKS</sequence>
<proteinExistence type="evidence at protein level"/>
<protein>
    <recommendedName>
        <fullName evidence="2">U-limacoditoxin(59)-Dv128</fullName>
        <shortName evidence="2">U-LCTX(59)-Dv128</shortName>
    </recommendedName>
    <alternativeName>
        <fullName evidence="2">Vulnericin</fullName>
    </alternativeName>
    <component>
        <recommendedName>
            <fullName evidence="3">U-LCTX(59)-Dv128 peptide 1</fullName>
        </recommendedName>
    </component>
    <component>
        <recommendedName>
            <fullName evidence="3">U-LCTX(59)-Dv128 peptide 2</fullName>
        </recommendedName>
    </component>
    <component>
        <recommendedName>
            <fullName evidence="3">U-LCTX(59)-Dv128 peptide 3</fullName>
        </recommendedName>
    </component>
</protein>
<comment type="function">
    <text evidence="3">Probable toxin.</text>
</comment>
<comment type="subcellular location">
    <subcellularLocation>
        <location evidence="1">Secreted</location>
    </subcellularLocation>
</comment>
<comment type="tissue specificity">
    <text evidence="4">Expressed by the venom secretory cell of the spine. The spine is a cuticular structure containing a single large nucleated venom-secreting cell at its base. It is an independent unit capable of producing, storing and injecting venom. On the back of D.vulnerans caterpillars, spines are grouped together by 50 to 100 to form scoli, of which there are eight in D.vulnerans.</text>
</comment>
<comment type="developmental stage">
    <text evidence="1">Only secreted by larvae. Adult moth do not have spines.</text>
</comment>
<comment type="similarity">
    <text evidence="3">Belongs to the limacoditoxin-59 family.</text>
</comment>